<feature type="chain" id="PRO_0000047788" description="Gastrula zinc finger protein xFG20-1">
    <location>
        <begin position="1"/>
        <end position="675"/>
    </location>
</feature>
<feature type="zinc finger region" description="C2H2-type 1" evidence="1">
    <location>
        <begin position="62"/>
        <end position="84"/>
    </location>
</feature>
<feature type="zinc finger region" description="C2H2-type 2" evidence="1">
    <location>
        <begin position="90"/>
        <end position="112"/>
    </location>
</feature>
<feature type="zinc finger region" description="C2H2-type 3" evidence="1">
    <location>
        <begin position="118"/>
        <end position="140"/>
    </location>
</feature>
<feature type="zinc finger region" description="C2H2-type 4" evidence="1">
    <location>
        <begin position="146"/>
        <end position="168"/>
    </location>
</feature>
<feature type="zinc finger region" description="C2H2-type 5" evidence="1">
    <location>
        <begin position="174"/>
        <end position="196"/>
    </location>
</feature>
<feature type="zinc finger region" description="C2H2-type 6" evidence="1">
    <location>
        <begin position="202"/>
        <end position="224"/>
    </location>
</feature>
<feature type="zinc finger region" description="C2H2-type 7" evidence="1">
    <location>
        <begin position="257"/>
        <end position="279"/>
    </location>
</feature>
<feature type="zinc finger region" description="C2H2-type 8" evidence="1">
    <location>
        <begin position="286"/>
        <end position="308"/>
    </location>
</feature>
<feature type="zinc finger region" description="C2H2-type 9" evidence="1">
    <location>
        <begin position="344"/>
        <end position="366"/>
    </location>
</feature>
<feature type="zinc finger region" description="C2H2-type 10" evidence="1">
    <location>
        <begin position="373"/>
        <end position="395"/>
    </location>
</feature>
<feature type="zinc finger region" description="C2H2-type 11" evidence="1">
    <location>
        <begin position="424"/>
        <end position="446"/>
    </location>
</feature>
<feature type="zinc finger region" description="C2H2-type 12" evidence="1">
    <location>
        <begin position="452"/>
        <end position="474"/>
    </location>
</feature>
<feature type="zinc finger region" description="C2H2-type 13" evidence="1">
    <location>
        <begin position="480"/>
        <end position="501"/>
    </location>
</feature>
<feature type="zinc finger region" description="C2H2-type 14" evidence="1">
    <location>
        <begin position="507"/>
        <end position="529"/>
    </location>
</feature>
<feature type="zinc finger region" description="C2H2-type 15" evidence="1">
    <location>
        <begin position="535"/>
        <end position="557"/>
    </location>
</feature>
<feature type="zinc finger region" description="C2H2-type 16" evidence="1">
    <location>
        <begin position="563"/>
        <end position="585"/>
    </location>
</feature>
<feature type="zinc finger region" description="C2H2-type 17" evidence="1">
    <location>
        <begin position="591"/>
        <end position="613"/>
    </location>
</feature>
<feature type="zinc finger region" description="C2H2-type 18" evidence="1">
    <location>
        <begin position="619"/>
        <end position="642"/>
    </location>
</feature>
<feature type="region of interest" description="Disordered" evidence="2">
    <location>
        <begin position="302"/>
        <end position="325"/>
    </location>
</feature>
<feature type="region of interest" description="Disordered" evidence="2">
    <location>
        <begin position="390"/>
        <end position="423"/>
    </location>
</feature>
<feature type="compositionally biased region" description="Polar residues" evidence="2">
    <location>
        <begin position="304"/>
        <end position="325"/>
    </location>
</feature>
<feature type="compositionally biased region" description="Polar residues" evidence="2">
    <location>
        <begin position="390"/>
        <end position="407"/>
    </location>
</feature>
<feature type="compositionally biased region" description="Basic and acidic residues" evidence="2">
    <location>
        <begin position="408"/>
        <end position="421"/>
    </location>
</feature>
<protein>
    <recommendedName>
        <fullName>Gastrula zinc finger protein xFG20-1</fullName>
    </recommendedName>
    <alternativeName>
        <fullName>XlCGF20.1</fullName>
    </alternativeName>
</protein>
<comment type="function">
    <text>May be involved in transcriptional regulation.</text>
</comment>
<comment type="subcellular location">
    <subcellularLocation>
        <location evidence="3">Nucleus</location>
    </subcellularLocation>
</comment>
<comment type="similarity">
    <text evidence="3">Belongs to the krueppel C2H2-type zinc-finger protein family.</text>
</comment>
<dbReference type="EMBL" id="X82643">
    <property type="protein sequence ID" value="CAA57965.1"/>
    <property type="molecule type" value="Genomic_DNA"/>
</dbReference>
<dbReference type="PIR" id="S51037">
    <property type="entry name" value="S51037"/>
</dbReference>
<dbReference type="SMR" id="P18714"/>
<dbReference type="Xenbase" id="XB-GENE-6464348">
    <property type="gene designation" value="znf268.S"/>
</dbReference>
<dbReference type="Proteomes" id="UP000186698">
    <property type="component" value="Unplaced"/>
</dbReference>
<dbReference type="GO" id="GO:0005634">
    <property type="term" value="C:nucleus"/>
    <property type="evidence" value="ECO:0007669"/>
    <property type="project" value="UniProtKB-SubCell"/>
</dbReference>
<dbReference type="GO" id="GO:0000981">
    <property type="term" value="F:DNA-binding transcription factor activity, RNA polymerase II-specific"/>
    <property type="evidence" value="ECO:0000318"/>
    <property type="project" value="GO_Central"/>
</dbReference>
<dbReference type="GO" id="GO:0000978">
    <property type="term" value="F:RNA polymerase II cis-regulatory region sequence-specific DNA binding"/>
    <property type="evidence" value="ECO:0000318"/>
    <property type="project" value="GO_Central"/>
</dbReference>
<dbReference type="GO" id="GO:0008270">
    <property type="term" value="F:zinc ion binding"/>
    <property type="evidence" value="ECO:0007669"/>
    <property type="project" value="UniProtKB-KW"/>
</dbReference>
<dbReference type="GO" id="GO:0006355">
    <property type="term" value="P:regulation of DNA-templated transcription"/>
    <property type="evidence" value="ECO:0000318"/>
    <property type="project" value="GO_Central"/>
</dbReference>
<dbReference type="FunFam" id="3.30.160.60:FF:000012">
    <property type="entry name" value="RB-associated KRAB zinc finger protein-like"/>
    <property type="match status" value="1"/>
</dbReference>
<dbReference type="FunFam" id="3.30.160.60:FF:000100">
    <property type="entry name" value="Zinc finger 45-like"/>
    <property type="match status" value="1"/>
</dbReference>
<dbReference type="FunFam" id="3.30.160.60:FF:000151">
    <property type="entry name" value="Zinc finger and SCAN domain-containing 21"/>
    <property type="match status" value="3"/>
</dbReference>
<dbReference type="FunFam" id="3.30.160.60:FF:000417">
    <property type="entry name" value="Zinc finger protein"/>
    <property type="match status" value="1"/>
</dbReference>
<dbReference type="FunFam" id="3.30.160.60:FF:000706">
    <property type="entry name" value="Zinc finger protein"/>
    <property type="match status" value="3"/>
</dbReference>
<dbReference type="FunFam" id="3.30.160.60:FF:002343">
    <property type="entry name" value="Zinc finger protein 33A"/>
    <property type="match status" value="4"/>
</dbReference>
<dbReference type="FunFam" id="3.30.160.60:FF:000925">
    <property type="entry name" value="Zinc finger protein 668"/>
    <property type="match status" value="1"/>
</dbReference>
<dbReference type="Gene3D" id="3.30.160.60">
    <property type="entry name" value="Classic Zinc Finger"/>
    <property type="match status" value="18"/>
</dbReference>
<dbReference type="InterPro" id="IPR036236">
    <property type="entry name" value="Znf_C2H2_sf"/>
</dbReference>
<dbReference type="InterPro" id="IPR013087">
    <property type="entry name" value="Znf_C2H2_type"/>
</dbReference>
<dbReference type="PANTHER" id="PTHR23226">
    <property type="entry name" value="ZINC FINGER AND SCAN DOMAIN-CONTAINING"/>
    <property type="match status" value="1"/>
</dbReference>
<dbReference type="PANTHER" id="PTHR23226:SF377">
    <property type="entry name" value="ZINC FINGER AND SCAN DOMAIN-CONTAINING PROTEIN 20"/>
    <property type="match status" value="1"/>
</dbReference>
<dbReference type="Pfam" id="PF00096">
    <property type="entry name" value="zf-C2H2"/>
    <property type="match status" value="15"/>
</dbReference>
<dbReference type="SMART" id="SM00355">
    <property type="entry name" value="ZnF_C2H2"/>
    <property type="match status" value="18"/>
</dbReference>
<dbReference type="SUPFAM" id="SSF57667">
    <property type="entry name" value="beta-beta-alpha zinc fingers"/>
    <property type="match status" value="11"/>
</dbReference>
<dbReference type="PROSITE" id="PS00028">
    <property type="entry name" value="ZINC_FINGER_C2H2_1"/>
    <property type="match status" value="17"/>
</dbReference>
<dbReference type="PROSITE" id="PS50157">
    <property type="entry name" value="ZINC_FINGER_C2H2_2"/>
    <property type="match status" value="18"/>
</dbReference>
<organism>
    <name type="scientific">Xenopus laevis</name>
    <name type="common">African clawed frog</name>
    <dbReference type="NCBI Taxonomy" id="8355"/>
    <lineage>
        <taxon>Eukaryota</taxon>
        <taxon>Metazoa</taxon>
        <taxon>Chordata</taxon>
        <taxon>Craniata</taxon>
        <taxon>Vertebrata</taxon>
        <taxon>Euteleostomi</taxon>
        <taxon>Amphibia</taxon>
        <taxon>Batrachia</taxon>
        <taxon>Anura</taxon>
        <taxon>Pipoidea</taxon>
        <taxon>Pipidae</taxon>
        <taxon>Xenopodinae</taxon>
        <taxon>Xenopus</taxon>
        <taxon>Xenopus</taxon>
    </lineage>
</organism>
<sequence length="675" mass="77116">MFCKEEEPYEFPENTFGTNELLPNYQQNCTDGEAISDTKSDLAYLEVEITDAHEESNTDKPFTCTECGKTFTRKPNYESHIRAHKGEKPFSCMVCDKAFAWKSNLLVHYSVHSGEKPFSCTECDKTFSNKAQLEKHLRVHTGEKPYSCEQCGKSFAHKCVLDSHQRTHTGDKPFSCTECGKKFSQRGNLHKHLKTHKLDQPHLCAECGKTFSFKSTLLEHQKIHSEIRPLSEFGKTFSDAHNLLKHQSTFTEEQKPFPCTECGEIFSNEHELLTHQSTHTEEQKPFPCTKCWGIFSNEHELRTHQSTHTEGQKSLPSTESGGTFSNEHELLTHQSTHTEEQKHLPCTECGGTFTNEQELLAHQSTHTEEQKPLPCTECGEIFSDEHELLTHQSTHTSPSTEFGVQTTEDNHQSPSKDHTGEKPFSCSECGKSFFYKSVLKDHLVVHTGKKPYHCIECGRSYTHQSSLKSHQRTHTGVKAFSCNLCDKLSIISKLRLHYRVHSGEKPYPCTECDKTFTKKEQLESHYKVHTGEKPYPCQQCGKSFSHKSVLKLHLRTHTGDKPFSCTECGKTFTRKPNYESHLTTHTGKKPFSCTECGKEFAWKRNLEAHYKMHTGEKPFTCTECGKTFTWKSNLRSHYTTVHGISPIQYACTEEDVNVIKTEEGDSFSYMVTLEN</sequence>
<accession>P18714</accession>
<proteinExistence type="inferred from homology"/>
<keyword id="KW-0238">DNA-binding</keyword>
<keyword id="KW-0479">Metal-binding</keyword>
<keyword id="KW-0539">Nucleus</keyword>
<keyword id="KW-1185">Reference proteome</keyword>
<keyword id="KW-0677">Repeat</keyword>
<keyword id="KW-0804">Transcription</keyword>
<keyword id="KW-0805">Transcription regulation</keyword>
<keyword id="KW-0862">Zinc</keyword>
<keyword id="KW-0863">Zinc-finger</keyword>
<reference key="1">
    <citation type="journal article" date="1994" name="Eur. J. Biochem.">
        <title>Sequence-specific recognition of a repetitive DNA element by a C2H2 zinc-finger protein in Xenopus.</title>
        <authorList>
            <person name="Schaefer U."/>
            <person name="Rausch O."/>
            <person name="Bouwmeester T."/>
            <person name="Pieler T."/>
        </authorList>
    </citation>
    <scope>NUCLEOTIDE SEQUENCE [GENOMIC DNA]</scope>
</reference>
<reference key="2">
    <citation type="journal article" date="1989" name="J. Mol. Biol.">
        <title>Second-order repeats in Xenopus laevis finger proteins.</title>
        <authorList>
            <person name="Nietfeld W."/>
            <person name="El-Baradi T."/>
            <person name="Mentzel H."/>
            <person name="Pieler T."/>
            <person name="Koester M."/>
            <person name="Poeting A."/>
            <person name="Knoechel W."/>
        </authorList>
    </citation>
    <scope>NUCLEOTIDE SEQUENCE [GENOMIC DNA] OF 85-613</scope>
</reference>
<name>ZG20_XENLA</name>
<evidence type="ECO:0000255" key="1">
    <source>
        <dbReference type="PROSITE-ProRule" id="PRU00042"/>
    </source>
</evidence>
<evidence type="ECO:0000256" key="2">
    <source>
        <dbReference type="SAM" id="MobiDB-lite"/>
    </source>
</evidence>
<evidence type="ECO:0000305" key="3"/>